<organism>
    <name type="scientific">Cupriavidus taiwanensis (strain DSM 17343 / BCRC 17206 / CCUG 44338 / CIP 107171 / LMG 19424 / R1)</name>
    <name type="common">Ralstonia taiwanensis (strain LMG 19424)</name>
    <dbReference type="NCBI Taxonomy" id="977880"/>
    <lineage>
        <taxon>Bacteria</taxon>
        <taxon>Pseudomonadati</taxon>
        <taxon>Pseudomonadota</taxon>
        <taxon>Betaproteobacteria</taxon>
        <taxon>Burkholderiales</taxon>
        <taxon>Burkholderiaceae</taxon>
        <taxon>Cupriavidus</taxon>
    </lineage>
</organism>
<evidence type="ECO:0000255" key="1">
    <source>
        <dbReference type="HAMAP-Rule" id="MF_01367"/>
    </source>
</evidence>
<evidence type="ECO:0000305" key="2"/>
<keyword id="KW-0687">Ribonucleoprotein</keyword>
<keyword id="KW-0689">Ribosomal protein</keyword>
<keyword id="KW-0694">RNA-binding</keyword>
<keyword id="KW-0699">rRNA-binding</keyword>
<proteinExistence type="inferred from homology"/>
<protein>
    <recommendedName>
        <fullName evidence="1">Large ribosomal subunit protein uL14</fullName>
    </recommendedName>
    <alternativeName>
        <fullName evidence="2">50S ribosomal protein L14</fullName>
    </alternativeName>
</protein>
<name>RL14_CUPTR</name>
<dbReference type="EMBL" id="CU633749">
    <property type="protein sequence ID" value="CAQ70858.1"/>
    <property type="molecule type" value="Genomic_DNA"/>
</dbReference>
<dbReference type="RefSeq" id="WP_010812388.1">
    <property type="nucleotide sequence ID" value="NC_010528.1"/>
</dbReference>
<dbReference type="SMR" id="B3R7R3"/>
<dbReference type="GeneID" id="34309511"/>
<dbReference type="KEGG" id="cti:RALTA_A2933"/>
<dbReference type="eggNOG" id="COG0093">
    <property type="taxonomic scope" value="Bacteria"/>
</dbReference>
<dbReference type="HOGENOM" id="CLU_095071_2_1_4"/>
<dbReference type="BioCyc" id="CTAI977880:RALTA_RS14305-MONOMER"/>
<dbReference type="Proteomes" id="UP000001692">
    <property type="component" value="Chromosome 1"/>
</dbReference>
<dbReference type="GO" id="GO:0022625">
    <property type="term" value="C:cytosolic large ribosomal subunit"/>
    <property type="evidence" value="ECO:0007669"/>
    <property type="project" value="TreeGrafter"/>
</dbReference>
<dbReference type="GO" id="GO:0070180">
    <property type="term" value="F:large ribosomal subunit rRNA binding"/>
    <property type="evidence" value="ECO:0007669"/>
    <property type="project" value="TreeGrafter"/>
</dbReference>
<dbReference type="GO" id="GO:0003735">
    <property type="term" value="F:structural constituent of ribosome"/>
    <property type="evidence" value="ECO:0007669"/>
    <property type="project" value="InterPro"/>
</dbReference>
<dbReference type="GO" id="GO:0006412">
    <property type="term" value="P:translation"/>
    <property type="evidence" value="ECO:0007669"/>
    <property type="project" value="UniProtKB-UniRule"/>
</dbReference>
<dbReference type="CDD" id="cd00337">
    <property type="entry name" value="Ribosomal_uL14"/>
    <property type="match status" value="1"/>
</dbReference>
<dbReference type="FunFam" id="2.40.150.20:FF:000001">
    <property type="entry name" value="50S ribosomal protein L14"/>
    <property type="match status" value="1"/>
</dbReference>
<dbReference type="Gene3D" id="2.40.150.20">
    <property type="entry name" value="Ribosomal protein L14"/>
    <property type="match status" value="1"/>
</dbReference>
<dbReference type="HAMAP" id="MF_01367">
    <property type="entry name" value="Ribosomal_uL14"/>
    <property type="match status" value="1"/>
</dbReference>
<dbReference type="InterPro" id="IPR000218">
    <property type="entry name" value="Ribosomal_uL14"/>
</dbReference>
<dbReference type="InterPro" id="IPR005745">
    <property type="entry name" value="Ribosomal_uL14_bac-type"/>
</dbReference>
<dbReference type="InterPro" id="IPR019972">
    <property type="entry name" value="Ribosomal_uL14_CS"/>
</dbReference>
<dbReference type="InterPro" id="IPR036853">
    <property type="entry name" value="Ribosomal_uL14_sf"/>
</dbReference>
<dbReference type="NCBIfam" id="TIGR01067">
    <property type="entry name" value="rplN_bact"/>
    <property type="match status" value="1"/>
</dbReference>
<dbReference type="PANTHER" id="PTHR11761">
    <property type="entry name" value="50S/60S RIBOSOMAL PROTEIN L14/L23"/>
    <property type="match status" value="1"/>
</dbReference>
<dbReference type="PANTHER" id="PTHR11761:SF3">
    <property type="entry name" value="LARGE RIBOSOMAL SUBUNIT PROTEIN UL14M"/>
    <property type="match status" value="1"/>
</dbReference>
<dbReference type="Pfam" id="PF00238">
    <property type="entry name" value="Ribosomal_L14"/>
    <property type="match status" value="1"/>
</dbReference>
<dbReference type="SMART" id="SM01374">
    <property type="entry name" value="Ribosomal_L14"/>
    <property type="match status" value="1"/>
</dbReference>
<dbReference type="SUPFAM" id="SSF50193">
    <property type="entry name" value="Ribosomal protein L14"/>
    <property type="match status" value="1"/>
</dbReference>
<dbReference type="PROSITE" id="PS00049">
    <property type="entry name" value="RIBOSOMAL_L14"/>
    <property type="match status" value="1"/>
</dbReference>
<feature type="chain" id="PRO_1000144252" description="Large ribosomal subunit protein uL14">
    <location>
        <begin position="1"/>
        <end position="122"/>
    </location>
</feature>
<comment type="function">
    <text evidence="1">Binds to 23S rRNA. Forms part of two intersubunit bridges in the 70S ribosome.</text>
</comment>
<comment type="subunit">
    <text evidence="1">Part of the 50S ribosomal subunit. Forms a cluster with proteins L3 and L19. In the 70S ribosome, L14 and L19 interact and together make contacts with the 16S rRNA in bridges B5 and B8.</text>
</comment>
<comment type="similarity">
    <text evidence="1">Belongs to the universal ribosomal protein uL14 family.</text>
</comment>
<sequence length="122" mass="13335">MIQTESRLEVADNTGAREVLCIKVLGGSKRRYASVGDIIKVTVKDAAPRGRVKKGDIYNAVVVRTAKGVRRADGSLIKFDGNAAVLLNNKLEPIGTRIFGPVTRELRTERFMKIVSLAPEVL</sequence>
<reference key="1">
    <citation type="journal article" date="2008" name="Genome Res.">
        <title>Genome sequence of the beta-rhizobium Cupriavidus taiwanensis and comparative genomics of rhizobia.</title>
        <authorList>
            <person name="Amadou C."/>
            <person name="Pascal G."/>
            <person name="Mangenot S."/>
            <person name="Glew M."/>
            <person name="Bontemps C."/>
            <person name="Capela D."/>
            <person name="Carrere S."/>
            <person name="Cruveiller S."/>
            <person name="Dossat C."/>
            <person name="Lajus A."/>
            <person name="Marchetti M."/>
            <person name="Poinsot V."/>
            <person name="Rouy Z."/>
            <person name="Servin B."/>
            <person name="Saad M."/>
            <person name="Schenowitz C."/>
            <person name="Barbe V."/>
            <person name="Batut J."/>
            <person name="Medigue C."/>
            <person name="Masson-Boivin C."/>
        </authorList>
    </citation>
    <scope>NUCLEOTIDE SEQUENCE [LARGE SCALE GENOMIC DNA]</scope>
    <source>
        <strain>DSM 17343 / BCRC 17206 / CCUG 44338 / CIP 107171 / LMG 19424 / R1</strain>
    </source>
</reference>
<gene>
    <name evidence="1" type="primary">rplN</name>
    <name type="ordered locus">RALTA_A2933</name>
</gene>
<accession>B3R7R3</accession>